<feature type="signal peptide" evidence="2">
    <location>
        <begin position="1"/>
        <end position="17"/>
    </location>
</feature>
<feature type="chain" id="PRO_0000024823" description="Exopolygalacturonase">
    <location>
        <begin position="18"/>
        <end position="446"/>
    </location>
</feature>
<feature type="repeat" description="PbH1 1" evidence="2">
    <location>
        <begin position="236"/>
        <end position="257"/>
    </location>
</feature>
<feature type="repeat" description="PbH1 2" evidence="2">
    <location>
        <begin position="259"/>
        <end position="279"/>
    </location>
</feature>
<feature type="repeat" description="PbH1 3" evidence="2">
    <location>
        <begin position="290"/>
        <end position="311"/>
    </location>
</feature>
<feature type="repeat" description="PbH1 4" evidence="2">
    <location>
        <begin position="332"/>
        <end position="353"/>
    </location>
</feature>
<feature type="repeat" description="PbH1 5" evidence="2">
    <location>
        <begin position="367"/>
        <end position="398"/>
    </location>
</feature>
<feature type="repeat" description="PbH1 6" evidence="2">
    <location>
        <begin position="403"/>
        <end position="434"/>
    </location>
</feature>
<feature type="active site" description="Proton donor" evidence="1">
    <location>
        <position position="250"/>
    </location>
</feature>
<feature type="active site" evidence="4">
    <location>
        <position position="273"/>
    </location>
</feature>
<feature type="glycosylation site" description="N-linked (GlcNAc...) asparagine" evidence="3">
    <location>
        <position position="53"/>
    </location>
</feature>
<feature type="glycosylation site" description="N-linked (GlcNAc...) asparagine" evidence="3">
    <location>
        <position position="118"/>
    </location>
</feature>
<feature type="glycosylation site" description="N-linked (GlcNAc...) asparagine" evidence="3">
    <location>
        <position position="134"/>
    </location>
</feature>
<feature type="glycosylation site" description="N-linked (GlcNAc...) asparagine" evidence="3">
    <location>
        <position position="204"/>
    </location>
</feature>
<feature type="glycosylation site" description="N-linked (GlcNAc...) asparagine" evidence="3">
    <location>
        <position position="258"/>
    </location>
</feature>
<feature type="glycosylation site" description="N-linked (GlcNAc...) asparagine" evidence="3">
    <location>
        <position position="270"/>
    </location>
</feature>
<feature type="glycosylation site" description="N-linked (GlcNAc...) asparagine" evidence="3">
    <location>
        <position position="297"/>
    </location>
</feature>
<feature type="glycosylation site" description="N-linked (GlcNAc...) asparagine" evidence="3">
    <location>
        <position position="302"/>
    </location>
</feature>
<feature type="glycosylation site" description="N-linked (GlcNAc...) asparagine" evidence="3">
    <location>
        <position position="334"/>
    </location>
</feature>
<feature type="glycosylation site" description="N-linked (GlcNAc...) asparagine" evidence="3">
    <location>
        <position position="359"/>
    </location>
</feature>
<feature type="glycosylation site" description="N-linked (GlcNAc...) asparagine" evidence="3">
    <location>
        <position position="369"/>
    </location>
</feature>
<feature type="glycosylation site" description="N-linked (GlcNAc...) asparagine" evidence="3">
    <location>
        <position position="435"/>
    </location>
</feature>
<feature type="disulfide bond" evidence="1">
    <location>
        <begin position="252"/>
        <end position="269"/>
    </location>
</feature>
<feature type="disulfide bond" evidence="1">
    <location>
        <begin position="397"/>
        <end position="403"/>
    </location>
</feature>
<feature type="disulfide bond" evidence="1">
    <location>
        <begin position="424"/>
        <end position="436"/>
    </location>
</feature>
<proteinExistence type="inferred from homology"/>
<comment type="function">
    <text>Hydrolysis of 1,4-alpha-D-galactosiduronic linkages in pectate and other galacturonans.</text>
</comment>
<comment type="catalytic activity">
    <reaction>
        <text>[(1-&gt;4)-alpha-D-galacturonosyl](n) + H2O = alpha-D-galacturonate + [(1-&gt;4)-alpha-D-galacturonosyl](n-1)</text>
        <dbReference type="Rhea" id="RHEA:14117"/>
        <dbReference type="Rhea" id="RHEA-COMP:14570"/>
        <dbReference type="Rhea" id="RHEA-COMP:14572"/>
        <dbReference type="ChEBI" id="CHEBI:15377"/>
        <dbReference type="ChEBI" id="CHEBI:58658"/>
        <dbReference type="ChEBI" id="CHEBI:140523"/>
        <dbReference type="EC" id="3.2.1.67"/>
    </reaction>
</comment>
<comment type="subcellular location">
    <subcellularLocation>
        <location>Secreted</location>
    </subcellularLocation>
</comment>
<comment type="similarity">
    <text evidence="5">Belongs to the glycosyl hydrolase 28 family.</text>
</comment>
<dbReference type="EC" id="3.2.1.67"/>
<dbReference type="EMBL" id="L48982">
    <property type="protein sequence ID" value="AAC26146.1"/>
    <property type="molecule type" value="Genomic_DNA"/>
</dbReference>
<dbReference type="SMR" id="Q00359"/>
<dbReference type="CAZy" id="GH28">
    <property type="family name" value="Glycoside Hydrolase Family 28"/>
</dbReference>
<dbReference type="GlyCosmos" id="Q00359">
    <property type="glycosylation" value="12 sites, No reported glycans"/>
</dbReference>
<dbReference type="PHI-base" id="PHI:115"/>
<dbReference type="GO" id="GO:0005576">
    <property type="term" value="C:extracellular region"/>
    <property type="evidence" value="ECO:0007669"/>
    <property type="project" value="UniProtKB-SubCell"/>
</dbReference>
<dbReference type="GO" id="GO:0047911">
    <property type="term" value="F:galacturan 1,4-alpha-galacturonidase activity"/>
    <property type="evidence" value="ECO:0007669"/>
    <property type="project" value="UniProtKB-EC"/>
</dbReference>
<dbReference type="GO" id="GO:0004650">
    <property type="term" value="F:polygalacturonase activity"/>
    <property type="evidence" value="ECO:0007669"/>
    <property type="project" value="InterPro"/>
</dbReference>
<dbReference type="GO" id="GO:0071555">
    <property type="term" value="P:cell wall organization"/>
    <property type="evidence" value="ECO:0007669"/>
    <property type="project" value="UniProtKB-KW"/>
</dbReference>
<dbReference type="GO" id="GO:0045490">
    <property type="term" value="P:pectin catabolic process"/>
    <property type="evidence" value="ECO:0007669"/>
    <property type="project" value="UniProtKB-ARBA"/>
</dbReference>
<dbReference type="FunFam" id="2.160.20.10:FF:000027">
    <property type="entry name" value="Probable exopolygalacturonase X"/>
    <property type="match status" value="1"/>
</dbReference>
<dbReference type="Gene3D" id="2.160.20.10">
    <property type="entry name" value="Single-stranded right-handed beta-helix, Pectin lyase-like"/>
    <property type="match status" value="1"/>
</dbReference>
<dbReference type="InterPro" id="IPR000743">
    <property type="entry name" value="Glyco_hydro_28"/>
</dbReference>
<dbReference type="InterPro" id="IPR006626">
    <property type="entry name" value="PbH1"/>
</dbReference>
<dbReference type="InterPro" id="IPR012334">
    <property type="entry name" value="Pectin_lyas_fold"/>
</dbReference>
<dbReference type="InterPro" id="IPR011050">
    <property type="entry name" value="Pectin_lyase_fold/virulence"/>
</dbReference>
<dbReference type="PANTHER" id="PTHR31736">
    <property type="match status" value="1"/>
</dbReference>
<dbReference type="PANTHER" id="PTHR31736:SF14">
    <property type="entry name" value="EXOPOLYGALACTURONASE X-1-RELATED"/>
    <property type="match status" value="1"/>
</dbReference>
<dbReference type="Pfam" id="PF00295">
    <property type="entry name" value="Glyco_hydro_28"/>
    <property type="match status" value="1"/>
</dbReference>
<dbReference type="SMART" id="SM00710">
    <property type="entry name" value="PbH1"/>
    <property type="match status" value="6"/>
</dbReference>
<dbReference type="SUPFAM" id="SSF51126">
    <property type="entry name" value="Pectin lyase-like"/>
    <property type="match status" value="1"/>
</dbReference>
<dbReference type="PROSITE" id="PS00502">
    <property type="entry name" value="POLYGALACTURONASE"/>
    <property type="match status" value="1"/>
</dbReference>
<reference key="1">
    <citation type="journal article" date="1998" name="Appl. Environ. Microbiol.">
        <title>Targeted mutants of Cochliobolus carbonum lacking the two major extracellular polygalacturonases.</title>
        <authorList>
            <person name="Scott-Craig J.S."/>
            <person name="Cheng Y.Q."/>
            <person name="Cervone F."/>
            <person name="de Lorenzo G."/>
            <person name="Pitkin J.W."/>
            <person name="Walton J.D."/>
        </authorList>
    </citation>
    <scope>NUCLEOTIDE SEQUENCE [GENOMIC DNA]</scope>
    <source>
        <strain>ATCC 90305 / SB111 / 2R15</strain>
    </source>
</reference>
<protein>
    <recommendedName>
        <fullName>Exopolygalacturonase</fullName>
        <shortName>ExoPG</shortName>
        <ecNumber>3.2.1.67</ecNumber>
    </recommendedName>
    <alternativeName>
        <fullName>Galacturan 1,4-alpha-galacturonidase</fullName>
    </alternativeName>
    <alternativeName>
        <fullName>Poly(1,4-alpha-D-galacturonide)galacturonohydrolase</fullName>
    </alternativeName>
</protein>
<name>PGLRX_COCCA</name>
<sequence>MRVTDIISCALLQASIALSTPVEELGAKAVVAKRFPPVPFLPGKASSVPGSRNKTCMLKALGGGKDDSANILSAVKQCNNGGHVVFPKGQQFTIGTALDLTFLNGIDLDIQGTIQFTNDTDYWQANSFKQVFQNATTFFQLGGKDINVYGGGTLDGNGQAWYDLYAKDIYILRPILFGLIGAKNAKISDLKFRYSPQWYTLVANSSQVVFSNIDIFGDSKSKNPAKNTDGWDTYRSDNIIIQNSNINNGDDCVSFKPNSTNILVQNLVCNGSHGISVGSLGQYPGEVDIVENILVRNISMSNASDGARIKVWPGASSALSGDLQGGGGSGAVRNVTYDGMIVKNVDYAIEITQCYGQKNLTLCNQFPSNLTISDITIKNFKGTTSKKYDPRVGYVVCSSPKVCSDISIENIDVKSPSGTNLFTCANAEGIQSQVNCTVEGDKGGHS</sequence>
<accession>Q00359</accession>
<gene>
    <name type="primary">PGX1</name>
</gene>
<evidence type="ECO:0000250" key="1">
    <source>
        <dbReference type="UniProtKB" id="O74213"/>
    </source>
</evidence>
<evidence type="ECO:0000255" key="2"/>
<evidence type="ECO:0000255" key="3">
    <source>
        <dbReference type="PROSITE-ProRule" id="PRU00498"/>
    </source>
</evidence>
<evidence type="ECO:0000255" key="4">
    <source>
        <dbReference type="PROSITE-ProRule" id="PRU10052"/>
    </source>
</evidence>
<evidence type="ECO:0000305" key="5"/>
<organism>
    <name type="scientific">Cochliobolus carbonum</name>
    <name type="common">Maize leaf spot fungus</name>
    <name type="synonym">Bipolaris zeicola</name>
    <dbReference type="NCBI Taxonomy" id="5017"/>
    <lineage>
        <taxon>Eukaryota</taxon>
        <taxon>Fungi</taxon>
        <taxon>Dikarya</taxon>
        <taxon>Ascomycota</taxon>
        <taxon>Pezizomycotina</taxon>
        <taxon>Dothideomycetes</taxon>
        <taxon>Pleosporomycetidae</taxon>
        <taxon>Pleosporales</taxon>
        <taxon>Pleosporineae</taxon>
        <taxon>Pleosporaceae</taxon>
        <taxon>Bipolaris</taxon>
    </lineage>
</organism>
<keyword id="KW-0961">Cell wall biogenesis/degradation</keyword>
<keyword id="KW-1015">Disulfide bond</keyword>
<keyword id="KW-0325">Glycoprotein</keyword>
<keyword id="KW-0326">Glycosidase</keyword>
<keyword id="KW-0378">Hydrolase</keyword>
<keyword id="KW-0677">Repeat</keyword>
<keyword id="KW-0964">Secreted</keyword>
<keyword id="KW-0732">Signal</keyword>